<reference key="1">
    <citation type="journal article" date="2003" name="Nature">
        <title>Genome divergence in two Prochlorococcus ecotypes reflects oceanic niche differentiation.</title>
        <authorList>
            <person name="Rocap G."/>
            <person name="Larimer F.W."/>
            <person name="Lamerdin J.E."/>
            <person name="Malfatti S."/>
            <person name="Chain P."/>
            <person name="Ahlgren N.A."/>
            <person name="Arellano A."/>
            <person name="Coleman M."/>
            <person name="Hauser L."/>
            <person name="Hess W.R."/>
            <person name="Johnson Z.I."/>
            <person name="Land M.L."/>
            <person name="Lindell D."/>
            <person name="Post A.F."/>
            <person name="Regala W."/>
            <person name="Shah M."/>
            <person name="Shaw S.L."/>
            <person name="Steglich C."/>
            <person name="Sullivan M.B."/>
            <person name="Ting C.S."/>
            <person name="Tolonen A."/>
            <person name="Webb E.A."/>
            <person name="Zinser E.R."/>
            <person name="Chisholm S.W."/>
        </authorList>
    </citation>
    <scope>NUCLEOTIDE SEQUENCE [LARGE SCALE GENOMIC DNA]</scope>
    <source>
        <strain>MIT 9313</strain>
    </source>
</reference>
<sequence>MTQLQSLRGMVDLLPEQTRCWQAVESVARDHFRRAGLQEIRTPLLEVTELFARGIGEATDVVGKEMYTFVDRGDRSCTLRPEGTASVVRAALQHGLLSQGPQRFWYGGPMFRYERPQAGRQRQFYQIGVEYLGVGSPRSDAEVIALAWALLVDLGVQGLVLEINSLGTLQDRQKYREELVAWLEARSEELDDDSRKRLYTNPLRILDSKHPAIKELLQDAPTLFEALSVESKARFEEVQVDLEALQIPFQLNPRLVRGLDYYGHTAFEITSDQLGAQATVCGGGRYDGLVEQLGGAPTPAFGWAFGMERLMLLLEAAASINPSGSAARLRASTRPDLYVVNRGEQAERVALVIAHQLRAAGLVVELDSSGAAFNKQFKRAGRSRATWALVIGDDEAERGEGRLKYLQEAKTQANPTPIDKLHRLDDVTGLVCLVRE</sequence>
<protein>
    <recommendedName>
        <fullName evidence="1">Histidine--tRNA ligase</fullName>
        <ecNumber evidence="1">6.1.1.21</ecNumber>
    </recommendedName>
    <alternativeName>
        <fullName evidence="1">Histidyl-tRNA synthetase</fullName>
        <shortName evidence="1">HisRS</shortName>
    </alternativeName>
</protein>
<keyword id="KW-0030">Aminoacyl-tRNA synthetase</keyword>
<keyword id="KW-0067">ATP-binding</keyword>
<keyword id="KW-0963">Cytoplasm</keyword>
<keyword id="KW-0436">Ligase</keyword>
<keyword id="KW-0547">Nucleotide-binding</keyword>
<keyword id="KW-0648">Protein biosynthesis</keyword>
<keyword id="KW-1185">Reference proteome</keyword>
<feature type="chain" id="PRO_0000136222" description="Histidine--tRNA ligase">
    <location>
        <begin position="1"/>
        <end position="436"/>
    </location>
</feature>
<evidence type="ECO:0000255" key="1">
    <source>
        <dbReference type="HAMAP-Rule" id="MF_00127"/>
    </source>
</evidence>
<evidence type="ECO:0000305" key="2"/>
<comment type="catalytic activity">
    <reaction evidence="1">
        <text>tRNA(His) + L-histidine + ATP = L-histidyl-tRNA(His) + AMP + diphosphate + H(+)</text>
        <dbReference type="Rhea" id="RHEA:17313"/>
        <dbReference type="Rhea" id="RHEA-COMP:9665"/>
        <dbReference type="Rhea" id="RHEA-COMP:9689"/>
        <dbReference type="ChEBI" id="CHEBI:15378"/>
        <dbReference type="ChEBI" id="CHEBI:30616"/>
        <dbReference type="ChEBI" id="CHEBI:33019"/>
        <dbReference type="ChEBI" id="CHEBI:57595"/>
        <dbReference type="ChEBI" id="CHEBI:78442"/>
        <dbReference type="ChEBI" id="CHEBI:78527"/>
        <dbReference type="ChEBI" id="CHEBI:456215"/>
        <dbReference type="EC" id="6.1.1.21"/>
    </reaction>
</comment>
<comment type="subunit">
    <text evidence="1">Homodimer.</text>
</comment>
<comment type="subcellular location">
    <subcellularLocation>
        <location evidence="1">Cytoplasm</location>
    </subcellularLocation>
</comment>
<comment type="similarity">
    <text evidence="1">Belongs to the class-II aminoacyl-tRNA synthetase family.</text>
</comment>
<comment type="sequence caution" evidence="2">
    <conflict type="erroneous initiation">
        <sequence resource="EMBL-CDS" id="CAE22080"/>
    </conflict>
</comment>
<gene>
    <name evidence="1" type="primary">hisS</name>
    <name type="ordered locus">PMT_1905</name>
</gene>
<dbReference type="EC" id="6.1.1.21" evidence="1"/>
<dbReference type="EMBL" id="BX548175">
    <property type="protein sequence ID" value="CAE22080.1"/>
    <property type="status" value="ALT_INIT"/>
    <property type="molecule type" value="Genomic_DNA"/>
</dbReference>
<dbReference type="RefSeq" id="WP_011131271.1">
    <property type="nucleotide sequence ID" value="NC_005071.1"/>
</dbReference>
<dbReference type="SMR" id="Q7V4P3"/>
<dbReference type="KEGG" id="pmt:PMT_1905"/>
<dbReference type="eggNOG" id="COG0124">
    <property type="taxonomic scope" value="Bacteria"/>
</dbReference>
<dbReference type="HOGENOM" id="CLU_025113_1_1_3"/>
<dbReference type="OrthoDB" id="9800814at2"/>
<dbReference type="Proteomes" id="UP000001423">
    <property type="component" value="Chromosome"/>
</dbReference>
<dbReference type="GO" id="GO:0005737">
    <property type="term" value="C:cytoplasm"/>
    <property type="evidence" value="ECO:0007669"/>
    <property type="project" value="UniProtKB-SubCell"/>
</dbReference>
<dbReference type="GO" id="GO:0005524">
    <property type="term" value="F:ATP binding"/>
    <property type="evidence" value="ECO:0007669"/>
    <property type="project" value="UniProtKB-UniRule"/>
</dbReference>
<dbReference type="GO" id="GO:0004821">
    <property type="term" value="F:histidine-tRNA ligase activity"/>
    <property type="evidence" value="ECO:0007669"/>
    <property type="project" value="UniProtKB-UniRule"/>
</dbReference>
<dbReference type="GO" id="GO:0006427">
    <property type="term" value="P:histidyl-tRNA aminoacylation"/>
    <property type="evidence" value="ECO:0007669"/>
    <property type="project" value="UniProtKB-UniRule"/>
</dbReference>
<dbReference type="CDD" id="cd00773">
    <property type="entry name" value="HisRS-like_core"/>
    <property type="match status" value="1"/>
</dbReference>
<dbReference type="FunFam" id="3.30.930.10:FF:000005">
    <property type="entry name" value="Histidine--tRNA ligase"/>
    <property type="match status" value="1"/>
</dbReference>
<dbReference type="Gene3D" id="3.40.50.800">
    <property type="entry name" value="Anticodon-binding domain"/>
    <property type="match status" value="1"/>
</dbReference>
<dbReference type="Gene3D" id="3.30.930.10">
    <property type="entry name" value="Bira Bifunctional Protein, Domain 2"/>
    <property type="match status" value="1"/>
</dbReference>
<dbReference type="HAMAP" id="MF_00127">
    <property type="entry name" value="His_tRNA_synth"/>
    <property type="match status" value="1"/>
</dbReference>
<dbReference type="InterPro" id="IPR006195">
    <property type="entry name" value="aa-tRNA-synth_II"/>
</dbReference>
<dbReference type="InterPro" id="IPR045864">
    <property type="entry name" value="aa-tRNA-synth_II/BPL/LPL"/>
</dbReference>
<dbReference type="InterPro" id="IPR004154">
    <property type="entry name" value="Anticodon-bd"/>
</dbReference>
<dbReference type="InterPro" id="IPR036621">
    <property type="entry name" value="Anticodon-bd_dom_sf"/>
</dbReference>
<dbReference type="InterPro" id="IPR015807">
    <property type="entry name" value="His-tRNA-ligase"/>
</dbReference>
<dbReference type="InterPro" id="IPR041715">
    <property type="entry name" value="HisRS-like_core"/>
</dbReference>
<dbReference type="InterPro" id="IPR004516">
    <property type="entry name" value="HisRS/HisZ"/>
</dbReference>
<dbReference type="NCBIfam" id="TIGR00442">
    <property type="entry name" value="hisS"/>
    <property type="match status" value="1"/>
</dbReference>
<dbReference type="PANTHER" id="PTHR43707:SF1">
    <property type="entry name" value="HISTIDINE--TRNA LIGASE, MITOCHONDRIAL-RELATED"/>
    <property type="match status" value="1"/>
</dbReference>
<dbReference type="PANTHER" id="PTHR43707">
    <property type="entry name" value="HISTIDYL-TRNA SYNTHETASE"/>
    <property type="match status" value="1"/>
</dbReference>
<dbReference type="Pfam" id="PF03129">
    <property type="entry name" value="HGTP_anticodon"/>
    <property type="match status" value="1"/>
</dbReference>
<dbReference type="Pfam" id="PF13393">
    <property type="entry name" value="tRNA-synt_His"/>
    <property type="match status" value="1"/>
</dbReference>
<dbReference type="PIRSF" id="PIRSF001549">
    <property type="entry name" value="His-tRNA_synth"/>
    <property type="match status" value="1"/>
</dbReference>
<dbReference type="SUPFAM" id="SSF52954">
    <property type="entry name" value="Class II aaRS ABD-related"/>
    <property type="match status" value="1"/>
</dbReference>
<dbReference type="SUPFAM" id="SSF55681">
    <property type="entry name" value="Class II aaRS and biotin synthetases"/>
    <property type="match status" value="1"/>
</dbReference>
<dbReference type="PROSITE" id="PS50862">
    <property type="entry name" value="AA_TRNA_LIGASE_II"/>
    <property type="match status" value="1"/>
</dbReference>
<organism>
    <name type="scientific">Prochlorococcus marinus (strain MIT 9313)</name>
    <dbReference type="NCBI Taxonomy" id="74547"/>
    <lineage>
        <taxon>Bacteria</taxon>
        <taxon>Bacillati</taxon>
        <taxon>Cyanobacteriota</taxon>
        <taxon>Cyanophyceae</taxon>
        <taxon>Synechococcales</taxon>
        <taxon>Prochlorococcaceae</taxon>
        <taxon>Prochlorococcus</taxon>
    </lineage>
</organism>
<accession>Q7V4P3</accession>
<name>SYH_PROMM</name>
<proteinExistence type="inferred from homology"/>